<accession>P0DQJ3</accession>
<comment type="function">
    <text evidence="1">Is toxic to both insects and mammals. Induces reversible paralysis when injected into S.frugiperda larvae. Reduces both the amplitude and frequency of responses from muscle (GF-TTM and GF-DLM) pathways in the D.melanogaster giant fiber circuit, suggesting an action at the neuromuscular junction, which is mediated by glutamatergic receptors. In mice, intracranial injection of 30 ug causes increased urination, myoclonus, hypermotility with circular movements followed by respiratory and generalized seizures resulting in death within 25-35 minutes of injection.</text>
</comment>
<comment type="subcellular location">
    <subcellularLocation>
        <location evidence="2">Secreted</location>
    </subcellularLocation>
</comment>
<comment type="tissue specificity">
    <text evidence="5">Expressed by the venom gland.</text>
</comment>
<comment type="mass spectrometry" mass="5457.7" method="Electrospray" evidence="2">
    <text>Monoisotopic mass.</text>
</comment>
<comment type="mass spectrometry" mass="5473.7" method="Electrospray" evidence="2">
    <text>Oxidized form, monoisotopic mass.</text>
</comment>
<comment type="similarity">
    <text evidence="4">Belongs to the neurotoxin 12 (Hwtx-2) family. 01 (Ap1a) subfamily.</text>
</comment>
<organism>
    <name type="scientific">Acanthoscurria gomesiana</name>
    <name type="common">Tarantula spider</name>
    <name type="synonym">Phormictopus pheopygus</name>
    <dbReference type="NCBI Taxonomy" id="115339"/>
    <lineage>
        <taxon>Eukaryota</taxon>
        <taxon>Metazoa</taxon>
        <taxon>Ecdysozoa</taxon>
        <taxon>Arthropoda</taxon>
        <taxon>Chelicerata</taxon>
        <taxon>Arachnida</taxon>
        <taxon>Araneae</taxon>
        <taxon>Mygalomorphae</taxon>
        <taxon>Theraphosidae</taxon>
        <taxon>Acanthoscurria</taxon>
    </lineage>
</organism>
<proteinExistence type="evidence at protein level"/>
<name>TXA1_ACAGO</name>
<protein>
    <recommendedName>
        <fullName evidence="3">U1-theraphotoxin-Agm1a</fullName>
        <shortName evidence="3">U1-TRTX-Agm1a</shortName>
    </recommendedName>
</protein>
<keyword id="KW-1015">Disulfide bond</keyword>
<keyword id="KW-0528">Neurotoxin</keyword>
<keyword id="KW-0558">Oxidation</keyword>
<keyword id="KW-0964">Secreted</keyword>
<keyword id="KW-0800">Toxin</keyword>
<reference key="1">
    <citation type="journal article" date="2017" name="J. Proteomics">
        <title>Peptidomics of Acanthoscurria gomesiana spider venom reveals new toxins with potential antimicrobial activity.</title>
        <authorList>
            <person name="Abreu T.F."/>
            <person name="Sumitomo B.N."/>
            <person name="Nishiyama M.Y. Jr."/>
            <person name="Oliveira U.C."/>
            <person name="Souza G.H."/>
            <person name="Kitano E.S."/>
            <person name="Zelanis A."/>
            <person name="Serrano S.M."/>
            <person name="Junqueira-de-Azevedo I."/>
            <person name="Silva P.I. Jr."/>
            <person name="Tashima A.K."/>
        </authorList>
    </citation>
    <scope>NUCLEOTIDE SEQUENCE [MRNA]</scope>
    <scope>MASS SPECTROMETRY</scope>
    <scope>SUBCELLULAR LOCATION</scope>
    <scope>OXIDATION AT MET-44</scope>
    <source>
        <tissue>Venom</tissue>
        <tissue>Venom gland</tissue>
    </source>
</reference>
<sequence length="48" mass="5468">IIECFFSCEIEKDGKSKEGKPCKPKGDKDKDKKCSGGWRCKIKMCLKI</sequence>
<dbReference type="GO" id="GO:0005576">
    <property type="term" value="C:extracellular region"/>
    <property type="evidence" value="ECO:0007669"/>
    <property type="project" value="UniProtKB-SubCell"/>
</dbReference>
<dbReference type="GO" id="GO:0090729">
    <property type="term" value="F:toxin activity"/>
    <property type="evidence" value="ECO:0007669"/>
    <property type="project" value="UniProtKB-KW"/>
</dbReference>
<dbReference type="InterPro" id="IPR012625">
    <property type="entry name" value="Hwtx-2-like"/>
</dbReference>
<dbReference type="Pfam" id="PF08089">
    <property type="entry name" value="Toxin_20"/>
    <property type="match status" value="1"/>
</dbReference>
<dbReference type="SUPFAM" id="SSF57059">
    <property type="entry name" value="omega toxin-like"/>
    <property type="match status" value="1"/>
</dbReference>
<evidence type="ECO:0000250" key="1">
    <source>
        <dbReference type="UniProtKB" id="B3EWY4"/>
    </source>
</evidence>
<evidence type="ECO:0000269" key="2">
    <source>
    </source>
</evidence>
<evidence type="ECO:0000303" key="3">
    <source>
    </source>
</evidence>
<evidence type="ECO:0000305" key="4"/>
<evidence type="ECO:0000305" key="5">
    <source>
    </source>
</evidence>
<feature type="chain" id="PRO_0000448546" description="U1-theraphotoxin-Agm1a" evidence="2">
    <location>
        <begin position="1"/>
        <end position="48"/>
    </location>
</feature>
<feature type="modified residue" description="Methionine sulfoxide; partial" evidence="2">
    <location>
        <position position="44"/>
    </location>
</feature>
<feature type="disulfide bond" evidence="1">
    <location>
        <begin position="4"/>
        <end position="34"/>
    </location>
</feature>
<feature type="disulfide bond" evidence="1">
    <location>
        <begin position="8"/>
        <end position="40"/>
    </location>
</feature>
<feature type="disulfide bond" evidence="1">
    <location>
        <begin position="22"/>
        <end position="45"/>
    </location>
</feature>